<protein>
    <recommendedName>
        <fullName evidence="1">Eukaryotic translation initiation factor 3 subunit K</fullName>
        <shortName evidence="1">eIF3k</shortName>
    </recommendedName>
    <alternativeName>
        <fullName evidence="1">eIF-3 p25</fullName>
    </alternativeName>
</protein>
<gene>
    <name type="ORF">AGAP011580</name>
</gene>
<feature type="chain" id="PRO_0000365037" description="Eukaryotic translation initiation factor 3 subunit K">
    <location>
        <begin position="1"/>
        <end position="221"/>
    </location>
</feature>
<feature type="domain" description="PCI" evidence="2">
    <location>
        <begin position="46"/>
        <end position="215"/>
    </location>
</feature>
<reference key="1">
    <citation type="journal article" date="2002" name="Science">
        <title>The genome sequence of the malaria mosquito Anopheles gambiae.</title>
        <authorList>
            <person name="Holt R.A."/>
            <person name="Subramanian G.M."/>
            <person name="Halpern A."/>
            <person name="Sutton G.G."/>
            <person name="Charlab R."/>
            <person name="Nusskern D.R."/>
            <person name="Wincker P."/>
            <person name="Clark A.G."/>
            <person name="Ribeiro J.M.C."/>
            <person name="Wides R."/>
            <person name="Salzberg S.L."/>
            <person name="Loftus B.J."/>
            <person name="Yandell M.D."/>
            <person name="Majoros W.H."/>
            <person name="Rusch D.B."/>
            <person name="Lai Z."/>
            <person name="Kraft C.L."/>
            <person name="Abril J.F."/>
            <person name="Anthouard V."/>
            <person name="Arensburger P."/>
            <person name="Atkinson P.W."/>
            <person name="Baden H."/>
            <person name="de Berardinis V."/>
            <person name="Baldwin D."/>
            <person name="Benes V."/>
            <person name="Biedler J."/>
            <person name="Blass C."/>
            <person name="Bolanos R."/>
            <person name="Boscus D."/>
            <person name="Barnstead M."/>
            <person name="Cai S."/>
            <person name="Center A."/>
            <person name="Chaturverdi K."/>
            <person name="Christophides G.K."/>
            <person name="Chrystal M.A.M."/>
            <person name="Clamp M."/>
            <person name="Cravchik A."/>
            <person name="Curwen V."/>
            <person name="Dana A."/>
            <person name="Delcher A."/>
            <person name="Dew I."/>
            <person name="Evans C.A."/>
            <person name="Flanigan M."/>
            <person name="Grundschober-Freimoser A."/>
            <person name="Friedli L."/>
            <person name="Gu Z."/>
            <person name="Guan P."/>
            <person name="Guigo R."/>
            <person name="Hillenmeyer M.E."/>
            <person name="Hladun S.L."/>
            <person name="Hogan J.R."/>
            <person name="Hong Y.S."/>
            <person name="Hoover J."/>
            <person name="Jaillon O."/>
            <person name="Ke Z."/>
            <person name="Kodira C.D."/>
            <person name="Kokoza E."/>
            <person name="Koutsos A."/>
            <person name="Letunic I."/>
            <person name="Levitsky A.A."/>
            <person name="Liang Y."/>
            <person name="Lin J.-J."/>
            <person name="Lobo N.F."/>
            <person name="Lopez J.R."/>
            <person name="Malek J.A."/>
            <person name="McIntosh T.C."/>
            <person name="Meister S."/>
            <person name="Miller J.R."/>
            <person name="Mobarry C."/>
            <person name="Mongin E."/>
            <person name="Murphy S.D."/>
            <person name="O'Brochta D.A."/>
            <person name="Pfannkoch C."/>
            <person name="Qi R."/>
            <person name="Regier M.A."/>
            <person name="Remington K."/>
            <person name="Shao H."/>
            <person name="Sharakhova M.V."/>
            <person name="Sitter C.D."/>
            <person name="Shetty J."/>
            <person name="Smith T.J."/>
            <person name="Strong R."/>
            <person name="Sun J."/>
            <person name="Thomasova D."/>
            <person name="Ton L.Q."/>
            <person name="Topalis P."/>
            <person name="Tu Z.J."/>
            <person name="Unger M.F."/>
            <person name="Walenz B."/>
            <person name="Wang A.H."/>
            <person name="Wang J."/>
            <person name="Wang M."/>
            <person name="Wang X."/>
            <person name="Woodford K.J."/>
            <person name="Wortman J.R."/>
            <person name="Wu M."/>
            <person name="Yao A."/>
            <person name="Zdobnov E.M."/>
            <person name="Zhang H."/>
            <person name="Zhao Q."/>
            <person name="Zhao S."/>
            <person name="Zhu S.C."/>
            <person name="Zhimulev I."/>
            <person name="Coluzzi M."/>
            <person name="della Torre A."/>
            <person name="Roth C.W."/>
            <person name="Louis C."/>
            <person name="Kalush F."/>
            <person name="Mural R.J."/>
            <person name="Myers E.W."/>
            <person name="Adams M.D."/>
            <person name="Smith H.O."/>
            <person name="Broder S."/>
            <person name="Gardner M.J."/>
            <person name="Fraser C.M."/>
            <person name="Birney E."/>
            <person name="Bork P."/>
            <person name="Brey P.T."/>
            <person name="Venter J.C."/>
            <person name="Weissenbach J."/>
            <person name="Kafatos F.C."/>
            <person name="Collins F.H."/>
            <person name="Hoffman S.L."/>
        </authorList>
    </citation>
    <scope>NUCLEOTIDE SEQUENCE [LARGE SCALE GENOMIC DNA]</scope>
    <source>
        <strain>PEST</strain>
    </source>
</reference>
<comment type="function">
    <text evidence="1">Component of the eukaryotic translation initiation factor 3 (eIF-3) complex, which is involved in protein synthesis of a specialized repertoire of mRNAs and, together with other initiation factors, stimulates binding of mRNA and methionyl-tRNAi to the 40S ribosome. The eIF-3 complex specifically targets and initiates translation of a subset of mRNAs involved in cell proliferation.</text>
</comment>
<comment type="subunit">
    <text evidence="1">Component of the eukaryotic translation initiation factor 3 (eIF-3) complex.</text>
</comment>
<comment type="subcellular location">
    <subcellularLocation>
        <location evidence="1">Cytoplasm</location>
    </subcellularLocation>
</comment>
<comment type="similarity">
    <text evidence="1">Belongs to the eIF-3 subunit K family.</text>
</comment>
<dbReference type="EMBL" id="AAAB01008834">
    <property type="protein sequence ID" value="EAA05704.2"/>
    <property type="molecule type" value="Genomic_DNA"/>
</dbReference>
<dbReference type="SMR" id="Q7QGK4"/>
<dbReference type="FunCoup" id="Q7QGK4">
    <property type="interactions" value="2039"/>
</dbReference>
<dbReference type="STRING" id="7165.Q7QGK4"/>
<dbReference type="PaxDb" id="7165-AGAP011580-PA"/>
<dbReference type="EnsemblMetazoa" id="AGAP011580-RA">
    <property type="protein sequence ID" value="AGAP011580-PA"/>
    <property type="gene ID" value="AGAP011580"/>
</dbReference>
<dbReference type="GeneID" id="1271181"/>
<dbReference type="KEGG" id="aga:1271181"/>
<dbReference type="CTD" id="27335"/>
<dbReference type="VEuPathDB" id="VectorBase:AGAMI1_007371"/>
<dbReference type="VEuPathDB" id="VectorBase:AGAP011580"/>
<dbReference type="eggNOG" id="KOG3252">
    <property type="taxonomic scope" value="Eukaryota"/>
</dbReference>
<dbReference type="HOGENOM" id="CLU_076723_1_0_1"/>
<dbReference type="InParanoid" id="Q7QGK4"/>
<dbReference type="OMA" id="WKHQGQG"/>
<dbReference type="PhylomeDB" id="Q7QGK4"/>
<dbReference type="Proteomes" id="UP000007062">
    <property type="component" value="Chromosome 3L"/>
</dbReference>
<dbReference type="GO" id="GO:0016282">
    <property type="term" value="C:eukaryotic 43S preinitiation complex"/>
    <property type="evidence" value="ECO:0007669"/>
    <property type="project" value="UniProtKB-UniRule"/>
</dbReference>
<dbReference type="GO" id="GO:0033290">
    <property type="term" value="C:eukaryotic 48S preinitiation complex"/>
    <property type="evidence" value="ECO:0007669"/>
    <property type="project" value="UniProtKB-UniRule"/>
</dbReference>
<dbReference type="GO" id="GO:0005852">
    <property type="term" value="C:eukaryotic translation initiation factor 3 complex"/>
    <property type="evidence" value="ECO:0000318"/>
    <property type="project" value="GO_Central"/>
</dbReference>
<dbReference type="GO" id="GO:0043022">
    <property type="term" value="F:ribosome binding"/>
    <property type="evidence" value="ECO:0007669"/>
    <property type="project" value="InterPro"/>
</dbReference>
<dbReference type="GO" id="GO:0003723">
    <property type="term" value="F:RNA binding"/>
    <property type="evidence" value="ECO:0007669"/>
    <property type="project" value="UniProtKB-UniRule"/>
</dbReference>
<dbReference type="GO" id="GO:0003743">
    <property type="term" value="F:translation initiation factor activity"/>
    <property type="evidence" value="ECO:0007669"/>
    <property type="project" value="UniProtKB-UniRule"/>
</dbReference>
<dbReference type="GO" id="GO:0001732">
    <property type="term" value="P:formation of cytoplasmic translation initiation complex"/>
    <property type="evidence" value="ECO:0007669"/>
    <property type="project" value="UniProtKB-UniRule"/>
</dbReference>
<dbReference type="GO" id="GO:0006446">
    <property type="term" value="P:regulation of translational initiation"/>
    <property type="evidence" value="ECO:0007669"/>
    <property type="project" value="InterPro"/>
</dbReference>
<dbReference type="FunFam" id="1.10.10.10:FF:000212">
    <property type="entry name" value="Eukaryotic translation initiation factor 3 subunit K"/>
    <property type="match status" value="1"/>
</dbReference>
<dbReference type="FunFam" id="1.25.40.250:FF:000001">
    <property type="entry name" value="Eukaryotic translation initiation factor 3 subunit K"/>
    <property type="match status" value="1"/>
</dbReference>
<dbReference type="Gene3D" id="1.25.40.250">
    <property type="entry name" value="ARM repeat, domain 1"/>
    <property type="match status" value="1"/>
</dbReference>
<dbReference type="Gene3D" id="1.10.10.10">
    <property type="entry name" value="Winged helix-like DNA-binding domain superfamily/Winged helix DNA-binding domain"/>
    <property type="match status" value="1"/>
</dbReference>
<dbReference type="HAMAP" id="MF_03010">
    <property type="entry name" value="eIF3k"/>
    <property type="match status" value="1"/>
</dbReference>
<dbReference type="InterPro" id="IPR016024">
    <property type="entry name" value="ARM-type_fold"/>
</dbReference>
<dbReference type="InterPro" id="IPR033464">
    <property type="entry name" value="CSN8_PSD8_EIF3K"/>
</dbReference>
<dbReference type="InterPro" id="IPR009374">
    <property type="entry name" value="eIF3k"/>
</dbReference>
<dbReference type="InterPro" id="IPR000717">
    <property type="entry name" value="PCI_dom"/>
</dbReference>
<dbReference type="InterPro" id="IPR016020">
    <property type="entry name" value="Transl_init_fac_sub12_N_euk"/>
</dbReference>
<dbReference type="InterPro" id="IPR036388">
    <property type="entry name" value="WH-like_DNA-bd_sf"/>
</dbReference>
<dbReference type="InterPro" id="IPR036390">
    <property type="entry name" value="WH_DNA-bd_sf"/>
</dbReference>
<dbReference type="PANTHER" id="PTHR13022">
    <property type="entry name" value="EUKARYOTIC TRANSLATION INITIATION FACTOR 3 SUBUNIT 11"/>
    <property type="match status" value="1"/>
</dbReference>
<dbReference type="PANTHER" id="PTHR13022:SF0">
    <property type="entry name" value="EUKARYOTIC TRANSLATION INITIATION FACTOR 3 SUBUNIT K"/>
    <property type="match status" value="1"/>
</dbReference>
<dbReference type="Pfam" id="PF10075">
    <property type="entry name" value="CSN8_PSD8_EIF3K"/>
    <property type="match status" value="1"/>
</dbReference>
<dbReference type="SUPFAM" id="SSF48371">
    <property type="entry name" value="ARM repeat"/>
    <property type="match status" value="1"/>
</dbReference>
<dbReference type="SUPFAM" id="SSF46785">
    <property type="entry name" value="Winged helix' DNA-binding domain"/>
    <property type="match status" value="1"/>
</dbReference>
<dbReference type="PROSITE" id="PS50250">
    <property type="entry name" value="PCI"/>
    <property type="match status" value="1"/>
</dbReference>
<sequence>MVHYVKMEDGKVMPIQEMLKSIERYNPEHLKVIEAYVEEQARENQYDLEANLACLKLYQFNPHLLNLDITYIILLKALTNFPHTDFVLCKCLLLPAQMNDETVKEIIYLADILEKCDFSLFWSRLAKHPENYQKISGFHDSIRKFVCHVVGITFQTIERGYLMQLLGNVEEKVLLSWLKRYGWKEEGGLVTIATQEDNIKTKHITEKIEFDNLAPLMANCL</sequence>
<name>EIF3K_ANOGA</name>
<organism>
    <name type="scientific">Anopheles gambiae</name>
    <name type="common">African malaria mosquito</name>
    <dbReference type="NCBI Taxonomy" id="7165"/>
    <lineage>
        <taxon>Eukaryota</taxon>
        <taxon>Metazoa</taxon>
        <taxon>Ecdysozoa</taxon>
        <taxon>Arthropoda</taxon>
        <taxon>Hexapoda</taxon>
        <taxon>Insecta</taxon>
        <taxon>Pterygota</taxon>
        <taxon>Neoptera</taxon>
        <taxon>Endopterygota</taxon>
        <taxon>Diptera</taxon>
        <taxon>Nematocera</taxon>
        <taxon>Culicoidea</taxon>
        <taxon>Culicidae</taxon>
        <taxon>Anophelinae</taxon>
        <taxon>Anopheles</taxon>
    </lineage>
</organism>
<accession>Q7QGK4</accession>
<proteinExistence type="inferred from homology"/>
<keyword id="KW-0963">Cytoplasm</keyword>
<keyword id="KW-0396">Initiation factor</keyword>
<keyword id="KW-0648">Protein biosynthesis</keyword>
<keyword id="KW-1185">Reference proteome</keyword>
<evidence type="ECO:0000255" key="1">
    <source>
        <dbReference type="HAMAP-Rule" id="MF_03010"/>
    </source>
</evidence>
<evidence type="ECO:0000255" key="2">
    <source>
        <dbReference type="PROSITE-ProRule" id="PRU01185"/>
    </source>
</evidence>